<accession>Q4R793</accession>
<dbReference type="EMBL" id="AB168928">
    <property type="protein sequence ID" value="BAE01029.1"/>
    <property type="molecule type" value="mRNA"/>
</dbReference>
<dbReference type="RefSeq" id="NP_001270899.1">
    <property type="nucleotide sequence ID" value="NM_001283970.1"/>
</dbReference>
<dbReference type="SMR" id="Q4R793"/>
<dbReference type="STRING" id="9541.ENSMFAP00000028943"/>
<dbReference type="eggNOG" id="KOG0665">
    <property type="taxonomic scope" value="Eukaryota"/>
</dbReference>
<dbReference type="Proteomes" id="UP000233100">
    <property type="component" value="Unplaced"/>
</dbReference>
<dbReference type="GO" id="GO:0005524">
    <property type="term" value="F:ATP binding"/>
    <property type="evidence" value="ECO:0007669"/>
    <property type="project" value="UniProtKB-KW"/>
</dbReference>
<dbReference type="GO" id="GO:0004674">
    <property type="term" value="F:protein serine/threonine kinase activity"/>
    <property type="evidence" value="ECO:0007669"/>
    <property type="project" value="TreeGrafter"/>
</dbReference>
<dbReference type="CDD" id="cd00180">
    <property type="entry name" value="PKc"/>
    <property type="match status" value="1"/>
</dbReference>
<dbReference type="FunFam" id="3.30.200.20:FF:000783">
    <property type="entry name" value="RGD1307355 protein"/>
    <property type="match status" value="1"/>
</dbReference>
<dbReference type="FunFam" id="1.25.10.10:FF:000579">
    <property type="entry name" value="Serine/threonine kinase like domain containing 1"/>
    <property type="match status" value="1"/>
</dbReference>
<dbReference type="Gene3D" id="3.30.200.20">
    <property type="entry name" value="Phosphorylase Kinase, domain 1"/>
    <property type="match status" value="1"/>
</dbReference>
<dbReference type="Gene3D" id="1.10.510.10">
    <property type="entry name" value="Transferase(Phosphotransferase) domain 1"/>
    <property type="match status" value="1"/>
</dbReference>
<dbReference type="InterPro" id="IPR016024">
    <property type="entry name" value="ARM-type_fold"/>
</dbReference>
<dbReference type="InterPro" id="IPR011009">
    <property type="entry name" value="Kinase-like_dom_sf"/>
</dbReference>
<dbReference type="InterPro" id="IPR000719">
    <property type="entry name" value="Prot_kinase_dom"/>
</dbReference>
<dbReference type="PANTHER" id="PTHR24363">
    <property type="entry name" value="SERINE/THREONINE PROTEIN KINASE"/>
    <property type="match status" value="1"/>
</dbReference>
<dbReference type="PANTHER" id="PTHR24363:SF5">
    <property type="entry name" value="SERINE_THREONINE KINASE-LIKE DOMAIN-CONTAINING PROTEIN STKLD1"/>
    <property type="match status" value="1"/>
</dbReference>
<dbReference type="Pfam" id="PF00069">
    <property type="entry name" value="Pkinase"/>
    <property type="match status" value="1"/>
</dbReference>
<dbReference type="SMART" id="SM00220">
    <property type="entry name" value="S_TKc"/>
    <property type="match status" value="1"/>
</dbReference>
<dbReference type="SUPFAM" id="SSF48371">
    <property type="entry name" value="ARM repeat"/>
    <property type="match status" value="1"/>
</dbReference>
<dbReference type="SUPFAM" id="SSF56112">
    <property type="entry name" value="Protein kinase-like (PK-like)"/>
    <property type="match status" value="1"/>
</dbReference>
<dbReference type="PROSITE" id="PS50011">
    <property type="entry name" value="PROTEIN_KINASE_DOM"/>
    <property type="match status" value="1"/>
</dbReference>
<organism>
    <name type="scientific">Macaca fascicularis</name>
    <name type="common">Crab-eating macaque</name>
    <name type="synonym">Cynomolgus monkey</name>
    <dbReference type="NCBI Taxonomy" id="9541"/>
    <lineage>
        <taxon>Eukaryota</taxon>
        <taxon>Metazoa</taxon>
        <taxon>Chordata</taxon>
        <taxon>Craniata</taxon>
        <taxon>Vertebrata</taxon>
        <taxon>Euteleostomi</taxon>
        <taxon>Mammalia</taxon>
        <taxon>Eutheria</taxon>
        <taxon>Euarchontoglires</taxon>
        <taxon>Primates</taxon>
        <taxon>Haplorrhini</taxon>
        <taxon>Catarrhini</taxon>
        <taxon>Cercopithecidae</taxon>
        <taxon>Cercopithecinae</taxon>
        <taxon>Macaca</taxon>
    </lineage>
</organism>
<keyword id="KW-0067">ATP-binding</keyword>
<keyword id="KW-0547">Nucleotide-binding</keyword>
<keyword id="KW-1185">Reference proteome</keyword>
<feature type="chain" id="PRO_0000227569" description="Serine/threonine kinase-like domain-containing protein STKLD1">
    <location>
        <begin position="1"/>
        <end position="649"/>
    </location>
</feature>
<feature type="domain" description="Protein kinase" evidence="1">
    <location>
        <begin position="28"/>
        <end position="379"/>
    </location>
</feature>
<feature type="region of interest" description="Disordered" evidence="2">
    <location>
        <begin position="1"/>
        <end position="23"/>
    </location>
</feature>
<feature type="region of interest" description="Disordered" evidence="2">
    <location>
        <begin position="621"/>
        <end position="640"/>
    </location>
</feature>
<feature type="compositionally biased region" description="Basic and acidic residues" evidence="2">
    <location>
        <begin position="1"/>
        <end position="13"/>
    </location>
</feature>
<feature type="binding site" evidence="1">
    <location>
        <begin position="34"/>
        <end position="42"/>
    </location>
    <ligand>
        <name>ATP</name>
        <dbReference type="ChEBI" id="CHEBI:30616"/>
    </ligand>
</feature>
<feature type="binding site" evidence="1">
    <location>
        <position position="57"/>
    </location>
    <ligand>
        <name>ATP</name>
        <dbReference type="ChEBI" id="CHEBI:30616"/>
    </ligand>
</feature>
<reference key="1">
    <citation type="submission" date="2005-06" db="EMBL/GenBank/DDBJ databases">
        <title>DNA sequences of macaque genes expressed in brain or testis and its evolutionary implications.</title>
        <authorList>
            <consortium name="International consortium for macaque cDNA sequencing and analysis"/>
        </authorList>
    </citation>
    <scope>NUCLEOTIDE SEQUENCE [LARGE SCALE MRNA]</scope>
    <source>
        <tissue>Testis</tissue>
    </source>
</reference>
<proteinExistence type="evidence at transcript level"/>
<sequence length="649" mass="72191">MLGPESDGRRPTQGERGPGYPGEPMDKYQVLYQLNPGALGVNLVVEEMETKVKRVIKQVECMDDHQASQALEELMPLLKLRHAHISVYRELFIMWNGEISSLYLCLVMEFNKLSFQEVIEDKRKAKEIIDSKWMQNVLGQVLDALEYLHHLDIIHRNLKPSNIILVSSDHCKLQDLSSNVLMTNKAKWNIRAESTEAMYLRKSLRQSPGSLETVLKTMEEKQIPDAETFGNLLPGMLQIDPSDRTTIKDVVHITFLSGSFKSSCISLTLYRETVPASITDMLLEGNVASILEVMQNFSGWPEVQFRAMKRLLKMPADQLGLPWRPELVEVVVTTMQLHDRVLDIQLCACSLLLHLLGQAMVHHPEAKALCNQAITSAVLSALWSYPEEESLLVLVYSLLAITTTQESQSESESVSEELQNAGLLEHILEHLNSSLESRDVCVSGLGLLWALLLDGIIVNKAPLEKVPDLISQVLATYPADGEMAEASCGVFWLLSLLGCIKEQQFEQVVALLLQSIRLCQNRVLLVNNAYRGLASLVEVSELAAFKVVVQEEGGSGLSLIKETYQLHKDDPEVVENVGMLLVHLASYEEILPELVSSSMKALVQEIKERFTSSLVSDRSAFSKPGLPPGGSPQPGCTASGGLEQMIAWN</sequence>
<comment type="domain">
    <text>The protein kinase domain is predicted to be catalytically inactive.</text>
</comment>
<comment type="similarity">
    <text evidence="1">Belongs to the protein kinase superfamily. Ser/Thr protein kinase family. STKL subfamily.</text>
</comment>
<comment type="caution">
    <text evidence="3">Asn-157 is present instead of the conserved Asp which is expected to be an active site residue.</text>
</comment>
<gene>
    <name type="primary">STKLD1</name>
    <name type="synonym">SGK071</name>
    <name type="ORF">QtsA-15869</name>
</gene>
<protein>
    <recommendedName>
        <fullName>Serine/threonine kinase-like domain-containing protein STKLD1</fullName>
    </recommendedName>
    <alternativeName>
        <fullName>Serine/threonine kinase-like domain-containing protein 1</fullName>
    </alternativeName>
    <alternativeName>
        <fullName>Sugen kinase 071</fullName>
    </alternativeName>
</protein>
<name>STKL1_MACFA</name>
<evidence type="ECO:0000255" key="1">
    <source>
        <dbReference type="PROSITE-ProRule" id="PRU00159"/>
    </source>
</evidence>
<evidence type="ECO:0000256" key="2">
    <source>
        <dbReference type="SAM" id="MobiDB-lite"/>
    </source>
</evidence>
<evidence type="ECO:0000305" key="3"/>